<name>KMO_FLAPJ</name>
<gene>
    <name evidence="1" type="primary">kmo</name>
    <name type="ordered locus">FP2212</name>
</gene>
<feature type="chain" id="PRO_0000361937" description="Kynurenine 3-monooxygenase">
    <location>
        <begin position="1"/>
        <end position="447"/>
    </location>
</feature>
<evidence type="ECO:0000255" key="1">
    <source>
        <dbReference type="HAMAP-Rule" id="MF_01971"/>
    </source>
</evidence>
<sequence length="447" mass="51302">MQKSQKIAIVGSGLVGSLLAIYLKKEGHTVHVYDRSPDIRTIQFSGRSINLAMSNRGWNALDGAGVGDKVRHIAIAMEKRAIHIGNQLNFQHYGLQGECIYSISRGVLNRKMIDLAEEAGAEFFFEQKIWDVNLTDATLQMGETERGEWTNVSYDMVFGADGAFSRIRHRMQRQSMFNYSQDFLNTGYKELHIPANPDGSYKLDKHSLHIWPRGKYMLIALPNLDGSFTCTLFMPFEGENSFASLDNRQKVEAFFAENLPDTVDVIPDLAEDFFKNPTSTLVTMKCFPWTYSDKVALIGDAAHAIVPFYGQGMNAGFEDITILYQMMQEYGNDWKTIFSEYEKSRKPDADAIAELSYRNFMEMSTKTANEKFLLQKKIERWFASKYPEKWIPLYDRVTFSTRPYSEALAIGDFQETIMQEILKIENIETNWETEEIEHKIIQLLNSK</sequence>
<proteinExistence type="inferred from homology"/>
<keyword id="KW-0274">FAD</keyword>
<keyword id="KW-0285">Flavoprotein</keyword>
<keyword id="KW-0503">Monooxygenase</keyword>
<keyword id="KW-0521">NADP</keyword>
<keyword id="KW-0560">Oxidoreductase</keyword>
<keyword id="KW-0662">Pyridine nucleotide biosynthesis</keyword>
<keyword id="KW-1185">Reference proteome</keyword>
<reference key="1">
    <citation type="journal article" date="2007" name="Nat. Biotechnol.">
        <title>Complete genome sequence of the fish pathogen Flavobacterium psychrophilum.</title>
        <authorList>
            <person name="Duchaud E."/>
            <person name="Boussaha M."/>
            <person name="Loux V."/>
            <person name="Bernardet J.-F."/>
            <person name="Michel C."/>
            <person name="Kerouault B."/>
            <person name="Mondot S."/>
            <person name="Nicolas P."/>
            <person name="Bossy R."/>
            <person name="Caron C."/>
            <person name="Bessieres P."/>
            <person name="Gibrat J.-F."/>
            <person name="Claverol S."/>
            <person name="Dumetz F."/>
            <person name="Le Henaff M."/>
            <person name="Benmansour A."/>
        </authorList>
    </citation>
    <scope>NUCLEOTIDE SEQUENCE [LARGE SCALE GENOMIC DNA]</scope>
    <source>
        <strain>ATCC 49511 / DSM 21280 / CIP 103535 / JIP02/86</strain>
    </source>
</reference>
<dbReference type="EC" id="1.14.13.9" evidence="1"/>
<dbReference type="EMBL" id="AM398681">
    <property type="protein sequence ID" value="CAL44268.1"/>
    <property type="molecule type" value="Genomic_DNA"/>
</dbReference>
<dbReference type="RefSeq" id="WP_011964302.1">
    <property type="nucleotide sequence ID" value="NC_009613.3"/>
</dbReference>
<dbReference type="RefSeq" id="YP_001297069.1">
    <property type="nucleotide sequence ID" value="NC_009613.3"/>
</dbReference>
<dbReference type="SMR" id="A6H1P4"/>
<dbReference type="STRING" id="402612.FP2212"/>
<dbReference type="EnsemblBacteria" id="CAL44268">
    <property type="protein sequence ID" value="CAL44268"/>
    <property type="gene ID" value="FP2212"/>
</dbReference>
<dbReference type="KEGG" id="fps:FP2212"/>
<dbReference type="PATRIC" id="fig|402612.5.peg.2259"/>
<dbReference type="eggNOG" id="COG0654">
    <property type="taxonomic scope" value="Bacteria"/>
</dbReference>
<dbReference type="HOGENOM" id="CLU_023210_0_1_10"/>
<dbReference type="OrthoDB" id="9766816at2"/>
<dbReference type="UniPathway" id="UPA00253">
    <property type="reaction ID" value="UER00328"/>
</dbReference>
<dbReference type="Proteomes" id="UP000006394">
    <property type="component" value="Chromosome"/>
</dbReference>
<dbReference type="GO" id="GO:0071949">
    <property type="term" value="F:FAD binding"/>
    <property type="evidence" value="ECO:0007669"/>
    <property type="project" value="InterPro"/>
</dbReference>
<dbReference type="GO" id="GO:0004502">
    <property type="term" value="F:kynurenine 3-monooxygenase activity"/>
    <property type="evidence" value="ECO:0007669"/>
    <property type="project" value="UniProtKB-UniRule"/>
</dbReference>
<dbReference type="GO" id="GO:0043420">
    <property type="term" value="P:anthranilate metabolic process"/>
    <property type="evidence" value="ECO:0007669"/>
    <property type="project" value="UniProtKB-UniRule"/>
</dbReference>
<dbReference type="GO" id="GO:0070189">
    <property type="term" value="P:kynurenine metabolic process"/>
    <property type="evidence" value="ECO:0007669"/>
    <property type="project" value="TreeGrafter"/>
</dbReference>
<dbReference type="GO" id="GO:0006569">
    <property type="term" value="P:L-tryptophan catabolic process"/>
    <property type="evidence" value="ECO:0007669"/>
    <property type="project" value="UniProtKB-UniRule"/>
</dbReference>
<dbReference type="GO" id="GO:0009435">
    <property type="term" value="P:NAD biosynthetic process"/>
    <property type="evidence" value="ECO:0007669"/>
    <property type="project" value="UniProtKB-UniPathway"/>
</dbReference>
<dbReference type="GO" id="GO:0019805">
    <property type="term" value="P:quinolinate biosynthetic process"/>
    <property type="evidence" value="ECO:0007669"/>
    <property type="project" value="UniProtKB-UniRule"/>
</dbReference>
<dbReference type="FunFam" id="3.50.50.60:FF:000185">
    <property type="entry name" value="Kynurenine 3-monooxygenase"/>
    <property type="match status" value="1"/>
</dbReference>
<dbReference type="Gene3D" id="3.50.50.60">
    <property type="entry name" value="FAD/NAD(P)-binding domain"/>
    <property type="match status" value="1"/>
</dbReference>
<dbReference type="HAMAP" id="MF_01971">
    <property type="entry name" value="Kynurenine_monooxygenase"/>
    <property type="match status" value="1"/>
</dbReference>
<dbReference type="InterPro" id="IPR002938">
    <property type="entry name" value="FAD-bd"/>
</dbReference>
<dbReference type="InterPro" id="IPR036188">
    <property type="entry name" value="FAD/NAD-bd_sf"/>
</dbReference>
<dbReference type="InterPro" id="IPR027545">
    <property type="entry name" value="Kynurenine_monooxygenase"/>
</dbReference>
<dbReference type="PANTHER" id="PTHR46028">
    <property type="entry name" value="KYNURENINE 3-MONOOXYGENASE"/>
    <property type="match status" value="1"/>
</dbReference>
<dbReference type="PANTHER" id="PTHR46028:SF2">
    <property type="entry name" value="KYNURENINE 3-MONOOXYGENASE"/>
    <property type="match status" value="1"/>
</dbReference>
<dbReference type="Pfam" id="PF01494">
    <property type="entry name" value="FAD_binding_3"/>
    <property type="match status" value="1"/>
</dbReference>
<dbReference type="PRINTS" id="PR00420">
    <property type="entry name" value="RNGMNOXGNASE"/>
</dbReference>
<dbReference type="SUPFAM" id="SSF51905">
    <property type="entry name" value="FAD/NAD(P)-binding domain"/>
    <property type="match status" value="1"/>
</dbReference>
<protein>
    <recommendedName>
        <fullName evidence="1">Kynurenine 3-monooxygenase</fullName>
        <ecNumber evidence="1">1.14.13.9</ecNumber>
    </recommendedName>
    <alternativeName>
        <fullName evidence="1">Kynurenine 3-hydroxylase</fullName>
    </alternativeName>
</protein>
<comment type="function">
    <text evidence="1">Catalyzes the hydroxylation of L-kynurenine (L-Kyn) to form 3-hydroxy-L-kynurenine (L-3OHKyn). Required for synthesis of quinolinic acid.</text>
</comment>
<comment type="catalytic activity">
    <reaction evidence="1">
        <text>L-kynurenine + NADPH + O2 + H(+) = 3-hydroxy-L-kynurenine + NADP(+) + H2O</text>
        <dbReference type="Rhea" id="RHEA:20545"/>
        <dbReference type="ChEBI" id="CHEBI:15377"/>
        <dbReference type="ChEBI" id="CHEBI:15378"/>
        <dbReference type="ChEBI" id="CHEBI:15379"/>
        <dbReference type="ChEBI" id="CHEBI:57783"/>
        <dbReference type="ChEBI" id="CHEBI:57959"/>
        <dbReference type="ChEBI" id="CHEBI:58125"/>
        <dbReference type="ChEBI" id="CHEBI:58349"/>
        <dbReference type="EC" id="1.14.13.9"/>
    </reaction>
</comment>
<comment type="cofactor">
    <cofactor evidence="1">
        <name>FAD</name>
        <dbReference type="ChEBI" id="CHEBI:57692"/>
    </cofactor>
</comment>
<comment type="pathway">
    <text evidence="1">Cofactor biosynthesis; NAD(+) biosynthesis; quinolinate from L-kynurenine: step 1/3.</text>
</comment>
<comment type="similarity">
    <text evidence="1">Belongs to the aromatic-ring hydroxylase family. KMO subfamily.</text>
</comment>
<organism>
    <name type="scientific">Flavobacterium psychrophilum (strain ATCC 49511 / DSM 21280 / CIP 103535 / JIP02/86)</name>
    <dbReference type="NCBI Taxonomy" id="402612"/>
    <lineage>
        <taxon>Bacteria</taxon>
        <taxon>Pseudomonadati</taxon>
        <taxon>Bacteroidota</taxon>
        <taxon>Flavobacteriia</taxon>
        <taxon>Flavobacteriales</taxon>
        <taxon>Flavobacteriaceae</taxon>
        <taxon>Flavobacterium</taxon>
    </lineage>
</organism>
<accession>A6H1P4</accession>